<organism>
    <name type="scientific">Bacillus cereus (strain ZK / E33L)</name>
    <dbReference type="NCBI Taxonomy" id="288681"/>
    <lineage>
        <taxon>Bacteria</taxon>
        <taxon>Bacillati</taxon>
        <taxon>Bacillota</taxon>
        <taxon>Bacilli</taxon>
        <taxon>Bacillales</taxon>
        <taxon>Bacillaceae</taxon>
        <taxon>Bacillus</taxon>
        <taxon>Bacillus cereus group</taxon>
    </lineage>
</organism>
<protein>
    <recommendedName>
        <fullName evidence="1">Glycerol-3-phosphate acyltransferase 1</fullName>
    </recommendedName>
    <alternativeName>
        <fullName evidence="1">Acyl-PO4 G3P acyltransferase 1</fullName>
    </alternativeName>
    <alternativeName>
        <fullName evidence="1">Acyl-phosphate--glycerol-3-phosphate acyltransferase 1</fullName>
    </alternativeName>
    <alternativeName>
        <fullName evidence="1">G3P acyltransferase 1</fullName>
        <shortName evidence="1">GPAT 1</shortName>
        <ecNumber evidence="1">2.3.1.275</ecNumber>
    </alternativeName>
    <alternativeName>
        <fullName evidence="1">Lysophosphatidic acid synthase 1</fullName>
        <shortName evidence="1">LPA synthase 1</shortName>
    </alternativeName>
</protein>
<name>PLSY1_BACCZ</name>
<comment type="function">
    <text evidence="1">Catalyzes the transfer of an acyl group from acyl-phosphate (acyl-PO(4)) to glycerol-3-phosphate (G3P) to form lysophosphatidic acid (LPA). This enzyme utilizes acyl-phosphate as fatty acyl donor, but not acyl-CoA or acyl-ACP.</text>
</comment>
<comment type="catalytic activity">
    <reaction evidence="1">
        <text>an acyl phosphate + sn-glycerol 3-phosphate = a 1-acyl-sn-glycero-3-phosphate + phosphate</text>
        <dbReference type="Rhea" id="RHEA:34075"/>
        <dbReference type="ChEBI" id="CHEBI:43474"/>
        <dbReference type="ChEBI" id="CHEBI:57597"/>
        <dbReference type="ChEBI" id="CHEBI:57970"/>
        <dbReference type="ChEBI" id="CHEBI:59918"/>
        <dbReference type="EC" id="2.3.1.275"/>
    </reaction>
</comment>
<comment type="pathway">
    <text evidence="1">Lipid metabolism; phospholipid metabolism.</text>
</comment>
<comment type="subunit">
    <text evidence="1">Probably interacts with PlsX.</text>
</comment>
<comment type="subcellular location">
    <subcellularLocation>
        <location evidence="1">Cell membrane</location>
        <topology evidence="1">Multi-pass membrane protein</topology>
    </subcellularLocation>
</comment>
<comment type="similarity">
    <text evidence="1">Belongs to the PlsY family.</text>
</comment>
<accession>Q63BB0</accession>
<dbReference type="EC" id="2.3.1.275" evidence="1"/>
<dbReference type="EMBL" id="CP000001">
    <property type="protein sequence ID" value="AAU18041.1"/>
    <property type="molecule type" value="Genomic_DNA"/>
</dbReference>
<dbReference type="SMR" id="Q63BB0"/>
<dbReference type="KEGG" id="bcz:BCE33L2216"/>
<dbReference type="UniPathway" id="UPA00085"/>
<dbReference type="Proteomes" id="UP000002612">
    <property type="component" value="Chromosome"/>
</dbReference>
<dbReference type="GO" id="GO:0005886">
    <property type="term" value="C:plasma membrane"/>
    <property type="evidence" value="ECO:0007669"/>
    <property type="project" value="UniProtKB-SubCell"/>
</dbReference>
<dbReference type="GO" id="GO:0043772">
    <property type="term" value="F:acyl-phosphate glycerol-3-phosphate acyltransferase activity"/>
    <property type="evidence" value="ECO:0007669"/>
    <property type="project" value="UniProtKB-UniRule"/>
</dbReference>
<dbReference type="GO" id="GO:0008654">
    <property type="term" value="P:phospholipid biosynthetic process"/>
    <property type="evidence" value="ECO:0007669"/>
    <property type="project" value="UniProtKB-UniRule"/>
</dbReference>
<dbReference type="HAMAP" id="MF_01043">
    <property type="entry name" value="PlsY"/>
    <property type="match status" value="1"/>
</dbReference>
<dbReference type="InterPro" id="IPR003811">
    <property type="entry name" value="G3P_acylTferase_PlsY"/>
</dbReference>
<dbReference type="NCBIfam" id="NF001254">
    <property type="entry name" value="PRK00220.2-1"/>
    <property type="match status" value="1"/>
</dbReference>
<dbReference type="PANTHER" id="PTHR30309:SF0">
    <property type="entry name" value="GLYCEROL-3-PHOSPHATE ACYLTRANSFERASE-RELATED"/>
    <property type="match status" value="1"/>
</dbReference>
<dbReference type="PANTHER" id="PTHR30309">
    <property type="entry name" value="INNER MEMBRANE PROTEIN YGIH"/>
    <property type="match status" value="1"/>
</dbReference>
<dbReference type="Pfam" id="PF02660">
    <property type="entry name" value="G3P_acyltransf"/>
    <property type="match status" value="1"/>
</dbReference>
<dbReference type="SMART" id="SM01207">
    <property type="entry name" value="G3P_acyltransf"/>
    <property type="match status" value="1"/>
</dbReference>
<sequence>MSDYMINSMQFLYLVASYLFGNILTAYIVTKWRHNVDIRDEGSGNPGARNMGRVYGKGYFVATFLGDAIKGAIVVSIAKYLFEDSTFVMLTLLAVIIGHIYPVLFKGKGGKGISTFIGGLIAFDYLIALTLVAVFIIFYLIFKGFTKPGLITIACLPLCMILYSYSIVTTILSALIIVLILYVNRE</sequence>
<keyword id="KW-1003">Cell membrane</keyword>
<keyword id="KW-0444">Lipid biosynthesis</keyword>
<keyword id="KW-0443">Lipid metabolism</keyword>
<keyword id="KW-0472">Membrane</keyword>
<keyword id="KW-0594">Phospholipid biosynthesis</keyword>
<keyword id="KW-1208">Phospholipid metabolism</keyword>
<keyword id="KW-0808">Transferase</keyword>
<keyword id="KW-0812">Transmembrane</keyword>
<keyword id="KW-1133">Transmembrane helix</keyword>
<reference key="1">
    <citation type="journal article" date="2006" name="J. Bacteriol.">
        <title>Pathogenomic sequence analysis of Bacillus cereus and Bacillus thuringiensis isolates closely related to Bacillus anthracis.</title>
        <authorList>
            <person name="Han C.S."/>
            <person name="Xie G."/>
            <person name="Challacombe J.F."/>
            <person name="Altherr M.R."/>
            <person name="Bhotika S.S."/>
            <person name="Bruce D."/>
            <person name="Campbell C.S."/>
            <person name="Campbell M.L."/>
            <person name="Chen J."/>
            <person name="Chertkov O."/>
            <person name="Cleland C."/>
            <person name="Dimitrijevic M."/>
            <person name="Doggett N.A."/>
            <person name="Fawcett J.J."/>
            <person name="Glavina T."/>
            <person name="Goodwin L.A."/>
            <person name="Hill K.K."/>
            <person name="Hitchcock P."/>
            <person name="Jackson P.J."/>
            <person name="Keim P."/>
            <person name="Kewalramani A.R."/>
            <person name="Longmire J."/>
            <person name="Lucas S."/>
            <person name="Malfatti S."/>
            <person name="McMurry K."/>
            <person name="Meincke L.J."/>
            <person name="Misra M."/>
            <person name="Moseman B.L."/>
            <person name="Mundt M."/>
            <person name="Munk A.C."/>
            <person name="Okinaka R.T."/>
            <person name="Parson-Quintana B."/>
            <person name="Reilly L.P."/>
            <person name="Richardson P."/>
            <person name="Robinson D.L."/>
            <person name="Rubin E."/>
            <person name="Saunders E."/>
            <person name="Tapia R."/>
            <person name="Tesmer J.G."/>
            <person name="Thayer N."/>
            <person name="Thompson L.S."/>
            <person name="Tice H."/>
            <person name="Ticknor L.O."/>
            <person name="Wills P.L."/>
            <person name="Brettin T.S."/>
            <person name="Gilna P."/>
        </authorList>
    </citation>
    <scope>NUCLEOTIDE SEQUENCE [LARGE SCALE GENOMIC DNA]</scope>
    <source>
        <strain>ZK / E33L</strain>
    </source>
</reference>
<feature type="chain" id="PRO_0000188321" description="Glycerol-3-phosphate acyltransferase 1">
    <location>
        <begin position="1"/>
        <end position="186"/>
    </location>
</feature>
<feature type="transmembrane region" description="Helical" evidence="1">
    <location>
        <begin position="9"/>
        <end position="29"/>
    </location>
</feature>
<feature type="transmembrane region" description="Helical" evidence="1">
    <location>
        <begin position="58"/>
        <end position="78"/>
    </location>
</feature>
<feature type="transmembrane region" description="Helical" evidence="1">
    <location>
        <begin position="85"/>
        <end position="105"/>
    </location>
</feature>
<feature type="transmembrane region" description="Helical" evidence="1">
    <location>
        <begin position="121"/>
        <end position="141"/>
    </location>
</feature>
<feature type="transmembrane region" description="Helical" evidence="1">
    <location>
        <begin position="161"/>
        <end position="181"/>
    </location>
</feature>
<proteinExistence type="inferred from homology"/>
<evidence type="ECO:0000255" key="1">
    <source>
        <dbReference type="HAMAP-Rule" id="MF_01043"/>
    </source>
</evidence>
<gene>
    <name evidence="1" type="primary">plsY1</name>
    <name type="ordered locus">BCE33L2216</name>
</gene>